<dbReference type="EMBL" id="AP006716">
    <property type="protein sequence ID" value="BAE05937.1"/>
    <property type="molecule type" value="Genomic_DNA"/>
</dbReference>
<dbReference type="RefSeq" id="WP_011276867.1">
    <property type="nucleotide sequence ID" value="NC_007168.1"/>
</dbReference>
<dbReference type="SMR" id="Q4L340"/>
<dbReference type="GeneID" id="93781867"/>
<dbReference type="KEGG" id="sha:SH2628"/>
<dbReference type="eggNOG" id="COG0360">
    <property type="taxonomic scope" value="Bacteria"/>
</dbReference>
<dbReference type="HOGENOM" id="CLU_113441_5_3_9"/>
<dbReference type="OrthoDB" id="9812702at2"/>
<dbReference type="Proteomes" id="UP000000543">
    <property type="component" value="Chromosome"/>
</dbReference>
<dbReference type="GO" id="GO:0005737">
    <property type="term" value="C:cytoplasm"/>
    <property type="evidence" value="ECO:0007669"/>
    <property type="project" value="UniProtKB-ARBA"/>
</dbReference>
<dbReference type="GO" id="GO:1990904">
    <property type="term" value="C:ribonucleoprotein complex"/>
    <property type="evidence" value="ECO:0007669"/>
    <property type="project" value="UniProtKB-KW"/>
</dbReference>
<dbReference type="GO" id="GO:0005840">
    <property type="term" value="C:ribosome"/>
    <property type="evidence" value="ECO:0007669"/>
    <property type="project" value="UniProtKB-KW"/>
</dbReference>
<dbReference type="GO" id="GO:0070181">
    <property type="term" value="F:small ribosomal subunit rRNA binding"/>
    <property type="evidence" value="ECO:0007669"/>
    <property type="project" value="TreeGrafter"/>
</dbReference>
<dbReference type="GO" id="GO:0003735">
    <property type="term" value="F:structural constituent of ribosome"/>
    <property type="evidence" value="ECO:0007669"/>
    <property type="project" value="InterPro"/>
</dbReference>
<dbReference type="GO" id="GO:0006412">
    <property type="term" value="P:translation"/>
    <property type="evidence" value="ECO:0007669"/>
    <property type="project" value="UniProtKB-UniRule"/>
</dbReference>
<dbReference type="CDD" id="cd00473">
    <property type="entry name" value="bS6"/>
    <property type="match status" value="1"/>
</dbReference>
<dbReference type="FunFam" id="3.30.70.60:FF:000002">
    <property type="entry name" value="30S ribosomal protein S6"/>
    <property type="match status" value="1"/>
</dbReference>
<dbReference type="Gene3D" id="3.30.70.60">
    <property type="match status" value="1"/>
</dbReference>
<dbReference type="HAMAP" id="MF_00360">
    <property type="entry name" value="Ribosomal_bS6"/>
    <property type="match status" value="1"/>
</dbReference>
<dbReference type="InterPro" id="IPR000529">
    <property type="entry name" value="Ribosomal_bS6"/>
</dbReference>
<dbReference type="InterPro" id="IPR035980">
    <property type="entry name" value="Ribosomal_bS6_sf"/>
</dbReference>
<dbReference type="InterPro" id="IPR020814">
    <property type="entry name" value="Ribosomal_S6_plastid/chlpt"/>
</dbReference>
<dbReference type="InterPro" id="IPR014717">
    <property type="entry name" value="Transl_elong_EF1B/ribsomal_bS6"/>
</dbReference>
<dbReference type="NCBIfam" id="TIGR00166">
    <property type="entry name" value="S6"/>
    <property type="match status" value="1"/>
</dbReference>
<dbReference type="PANTHER" id="PTHR21011">
    <property type="entry name" value="MITOCHONDRIAL 28S RIBOSOMAL PROTEIN S6"/>
    <property type="match status" value="1"/>
</dbReference>
<dbReference type="PANTHER" id="PTHR21011:SF1">
    <property type="entry name" value="SMALL RIBOSOMAL SUBUNIT PROTEIN BS6M"/>
    <property type="match status" value="1"/>
</dbReference>
<dbReference type="Pfam" id="PF01250">
    <property type="entry name" value="Ribosomal_S6"/>
    <property type="match status" value="1"/>
</dbReference>
<dbReference type="SUPFAM" id="SSF54995">
    <property type="entry name" value="Ribosomal protein S6"/>
    <property type="match status" value="1"/>
</dbReference>
<keyword id="KW-0687">Ribonucleoprotein</keyword>
<keyword id="KW-0689">Ribosomal protein</keyword>
<keyword id="KW-0694">RNA-binding</keyword>
<keyword id="KW-0699">rRNA-binding</keyword>
<proteinExistence type="inferred from homology"/>
<reference key="1">
    <citation type="journal article" date="2005" name="J. Bacteriol.">
        <title>Whole-genome sequencing of Staphylococcus haemolyticus uncovers the extreme plasticity of its genome and the evolution of human-colonizing staphylococcal species.</title>
        <authorList>
            <person name="Takeuchi F."/>
            <person name="Watanabe S."/>
            <person name="Baba T."/>
            <person name="Yuzawa H."/>
            <person name="Ito T."/>
            <person name="Morimoto Y."/>
            <person name="Kuroda M."/>
            <person name="Cui L."/>
            <person name="Takahashi M."/>
            <person name="Ankai A."/>
            <person name="Baba S."/>
            <person name="Fukui S."/>
            <person name="Lee J.C."/>
            <person name="Hiramatsu K."/>
        </authorList>
    </citation>
    <scope>NUCLEOTIDE SEQUENCE [LARGE SCALE GENOMIC DNA]</scope>
    <source>
        <strain>JCSC1435</strain>
    </source>
</reference>
<gene>
    <name evidence="1" type="primary">rpsF</name>
    <name type="ordered locus">SH2628</name>
</gene>
<name>RS6_STAHJ</name>
<evidence type="ECO:0000255" key="1">
    <source>
        <dbReference type="HAMAP-Rule" id="MF_00360"/>
    </source>
</evidence>
<evidence type="ECO:0000305" key="2"/>
<protein>
    <recommendedName>
        <fullName evidence="1">Small ribosomal subunit protein bS6</fullName>
    </recommendedName>
    <alternativeName>
        <fullName evidence="2">30S ribosomal protein S6</fullName>
    </alternativeName>
</protein>
<sequence>MRTYEIMYVVRPNIEEDAKKAVVERFNGILASEGSEVLEEKDWGKRRLAYEIEDFKEGFYNIVRIKTDNNRATDEFQRLAKISDDIIRYIVIREDQDK</sequence>
<feature type="chain" id="PRO_0000176843" description="Small ribosomal subunit protein bS6">
    <location>
        <begin position="1"/>
        <end position="98"/>
    </location>
</feature>
<organism>
    <name type="scientific">Staphylococcus haemolyticus (strain JCSC1435)</name>
    <dbReference type="NCBI Taxonomy" id="279808"/>
    <lineage>
        <taxon>Bacteria</taxon>
        <taxon>Bacillati</taxon>
        <taxon>Bacillota</taxon>
        <taxon>Bacilli</taxon>
        <taxon>Bacillales</taxon>
        <taxon>Staphylococcaceae</taxon>
        <taxon>Staphylococcus</taxon>
    </lineage>
</organism>
<accession>Q4L340</accession>
<comment type="function">
    <text evidence="1">Binds together with bS18 to 16S ribosomal RNA.</text>
</comment>
<comment type="similarity">
    <text evidence="1">Belongs to the bacterial ribosomal protein bS6 family.</text>
</comment>